<gene>
    <name type="primary">tauZ</name>
</gene>
<organism>
    <name type="scientific">Paracoccus pantotrophus</name>
    <name type="common">Thiosphaera pantotropha</name>
    <dbReference type="NCBI Taxonomy" id="82367"/>
    <lineage>
        <taxon>Bacteria</taxon>
        <taxon>Pseudomonadati</taxon>
        <taxon>Pseudomonadota</taxon>
        <taxon>Alphaproteobacteria</taxon>
        <taxon>Rhodobacterales</taxon>
        <taxon>Paracoccaceae</taxon>
        <taxon>Paracoccus</taxon>
    </lineage>
</organism>
<name>TAUZ_PARPN</name>
<accession>Q6RH51</accession>
<proteinExistence type="inferred from homology"/>
<keyword id="KW-1003">Cell membrane</keyword>
<keyword id="KW-0472">Membrane</keyword>
<keyword id="KW-0812">Transmembrane</keyword>
<keyword id="KW-1133">Transmembrane helix</keyword>
<sequence>MISTMIPSRGLIEEAFPGFAVSALVAATAQFLSDHYGAPAMLLALLLGLALNFLAEDGTRTAPGIAFTARTVLRLGVALLGARISAGMLAALGPGAIALVVAGVVLTILFALAASRLVGRGWRFALLTGGSVAICGASAAMAIAAVLPRYEKSERDLVFTVLSVTVLSTVAMVLYPMLAGLFGFTARDSGVFLGGTIHDVAQVVGAGFSIGPETGETATLVKLIRVSMLAPVVLCFSLAIRARGLADADGGKAPPLLPGFVIGFLALAGLNSLGLIPQGVSDFAGQVSRWALLIAIAAVGIKTSLGKMLEVGTGAIALILAETVFLAVFVTAGLHLLG</sequence>
<reference key="1">
    <citation type="journal article" date="2004" name="Microbiology">
        <title>Enzymes and genes of taurine and isethionate dissimilation in Paracoccus denitrificans.</title>
        <authorList>
            <person name="Brueggemann C."/>
            <person name="Denger K."/>
            <person name="Cook A.M."/>
            <person name="Ruff J."/>
        </authorList>
    </citation>
    <scope>NUCLEOTIDE SEQUENCE [GENOMIC DNA]</scope>
    <source>
        <strain>ATCC 17741 / DSM 65 / LMG 4218</strain>
    </source>
</reference>
<feature type="chain" id="PRO_0000157434" description="UPF0324 membrane protein TauZ">
    <location>
        <begin position="1"/>
        <end position="338"/>
    </location>
</feature>
<feature type="transmembrane region" description="Helical" evidence="1">
    <location>
        <begin position="36"/>
        <end position="55"/>
    </location>
</feature>
<feature type="transmembrane region" description="Helical" evidence="1">
    <location>
        <begin position="75"/>
        <end position="92"/>
    </location>
</feature>
<feature type="transmembrane region" description="Helical" evidence="1">
    <location>
        <begin position="96"/>
        <end position="118"/>
    </location>
</feature>
<feature type="transmembrane region" description="Helical" evidence="1">
    <location>
        <begin position="125"/>
        <end position="147"/>
    </location>
</feature>
<feature type="transmembrane region" description="Helical" evidence="1">
    <location>
        <begin position="162"/>
        <end position="184"/>
    </location>
</feature>
<feature type="transmembrane region" description="Helical" evidence="1">
    <location>
        <begin position="223"/>
        <end position="245"/>
    </location>
</feature>
<feature type="transmembrane region" description="Helical" evidence="1">
    <location>
        <begin position="255"/>
        <end position="277"/>
    </location>
</feature>
<feature type="transmembrane region" description="Helical" evidence="1">
    <location>
        <begin position="290"/>
        <end position="309"/>
    </location>
</feature>
<feature type="transmembrane region" description="Helical" evidence="1">
    <location>
        <begin position="314"/>
        <end position="336"/>
    </location>
</feature>
<comment type="subcellular location">
    <subcellularLocation>
        <location evidence="2">Cell membrane</location>
        <topology evidence="2">Multi-pass membrane protein</topology>
    </subcellularLocation>
</comment>
<comment type="similarity">
    <text evidence="2">Belongs to the UPF0324 family.</text>
</comment>
<evidence type="ECO:0000255" key="1"/>
<evidence type="ECO:0000305" key="2"/>
<protein>
    <recommendedName>
        <fullName>UPF0324 membrane protein TauZ</fullName>
    </recommendedName>
</protein>
<dbReference type="EMBL" id="AY498614">
    <property type="protein sequence ID" value="AAS78796.1"/>
    <property type="molecule type" value="Genomic_DNA"/>
</dbReference>
<dbReference type="RefSeq" id="WP_024845515.1">
    <property type="nucleotide sequence ID" value="NZ_CP038206.1"/>
</dbReference>
<dbReference type="SMR" id="Q6RH51"/>
<dbReference type="STRING" id="82367.SAMN04244567_03315"/>
<dbReference type="TCDB" id="2.A.98.1.1">
    <property type="family name" value="the putative sulfate exporter (pse) family"/>
</dbReference>
<dbReference type="eggNOG" id="COG2855">
    <property type="taxonomic scope" value="Bacteria"/>
</dbReference>
<dbReference type="GO" id="GO:0005886">
    <property type="term" value="C:plasma membrane"/>
    <property type="evidence" value="ECO:0007669"/>
    <property type="project" value="UniProtKB-SubCell"/>
</dbReference>
<dbReference type="InterPro" id="IPR018383">
    <property type="entry name" value="UPF0324_pro"/>
</dbReference>
<dbReference type="PANTHER" id="PTHR30106">
    <property type="entry name" value="INNER MEMBRANE PROTEIN YEIH-RELATED"/>
    <property type="match status" value="1"/>
</dbReference>
<dbReference type="PANTHER" id="PTHR30106:SF2">
    <property type="entry name" value="UPF0324 INNER MEMBRANE PROTEIN YEIH"/>
    <property type="match status" value="1"/>
</dbReference>
<dbReference type="Pfam" id="PF03601">
    <property type="entry name" value="Cons_hypoth698"/>
    <property type="match status" value="1"/>
</dbReference>